<accession>Q9DGG4</accession>
<accession>Q4RJW7</accession>
<comment type="function">
    <text evidence="1 2 3">Photoreceptor required for image-forming vision at low light intensity. While most salt water fish species use retinal as chromophore, most freshwater fish use 3-dehydroretinal, or a mixture of retinal and 3-dehydroretinal (By similarity). Light-induced isomerization of 11-cis to all-trans retinal triggers a conformational change that activates signaling via G-proteins. Subsequent receptor phosphorylation mediates displacement of the bound G-protein alpha subunit by arrestin and terminates signaling (By similarity).</text>
</comment>
<comment type="subcellular location">
    <subcellularLocation>
        <location evidence="2">Membrane</location>
        <topology evidence="2">Multi-pass membrane protein</topology>
    </subcellularLocation>
    <subcellularLocation>
        <location evidence="4">Cell projection</location>
        <location evidence="4">Cilium</location>
        <location evidence="4">Photoreceptor outer segment</location>
    </subcellularLocation>
    <text evidence="2">Synthesized in the inner segment (IS) of rod photoreceptor cells before vectorial transport to disk membranes in the rod outer segment (OS) photosensory cilia.</text>
</comment>
<comment type="PTM">
    <text evidence="1">Phosphorylated on some or all of the serine and threonine residues present in the C-terminal region.</text>
</comment>
<comment type="PTM">
    <text evidence="1">Contains one covalently linked retinal chromophore.</text>
</comment>
<comment type="similarity">
    <text evidence="6">Belongs to the G-protein coupled receptor 1 family. Opsin subfamily.</text>
</comment>
<comment type="sequence caution" evidence="8">
    <conflict type="erroneous gene model prediction">
        <sequence resource="EMBL-CDS" id="CAG11315"/>
    </conflict>
</comment>
<evidence type="ECO:0000250" key="1">
    <source>
        <dbReference type="UniProtKB" id="P02699"/>
    </source>
</evidence>
<evidence type="ECO:0000250" key="2">
    <source>
        <dbReference type="UniProtKB" id="P08100"/>
    </source>
</evidence>
<evidence type="ECO:0000250" key="3">
    <source>
        <dbReference type="UniProtKB" id="P32309"/>
    </source>
</evidence>
<evidence type="ECO:0000250" key="4">
    <source>
        <dbReference type="UniProtKB" id="P35359"/>
    </source>
</evidence>
<evidence type="ECO:0000255" key="5"/>
<evidence type="ECO:0000255" key="6">
    <source>
        <dbReference type="PROSITE-ProRule" id="PRU00521"/>
    </source>
</evidence>
<evidence type="ECO:0000256" key="7">
    <source>
        <dbReference type="SAM" id="MobiDB-lite"/>
    </source>
</evidence>
<evidence type="ECO:0000305" key="8"/>
<protein>
    <recommendedName>
        <fullName>Rhodopsin</fullName>
    </recommendedName>
</protein>
<keyword id="KW-0966">Cell projection</keyword>
<keyword id="KW-0157">Chromophore</keyword>
<keyword id="KW-1015">Disulfide bond</keyword>
<keyword id="KW-0297">G-protein coupled receptor</keyword>
<keyword id="KW-0325">Glycoprotein</keyword>
<keyword id="KW-0449">Lipoprotein</keyword>
<keyword id="KW-0472">Membrane</keyword>
<keyword id="KW-0564">Palmitate</keyword>
<keyword id="KW-0597">Phosphoprotein</keyword>
<keyword id="KW-0600">Photoreceptor protein</keyword>
<keyword id="KW-0675">Receptor</keyword>
<keyword id="KW-1185">Reference proteome</keyword>
<keyword id="KW-0681">Retinal protein</keyword>
<keyword id="KW-0716">Sensory transduction</keyword>
<keyword id="KW-0807">Transducer</keyword>
<keyword id="KW-0812">Transmembrane</keyword>
<keyword id="KW-1133">Transmembrane helix</keyword>
<keyword id="KW-0844">Vision</keyword>
<proteinExistence type="inferred from homology"/>
<reference key="1">
    <citation type="submission" date="2000-08" db="EMBL/GenBank/DDBJ databases">
        <title>Tetraodon nigroviridis gene for rhodopsin.</title>
        <authorList>
            <person name="Fischer C."/>
        </authorList>
    </citation>
    <scope>NUCLEOTIDE SEQUENCE [GENOMIC DNA]</scope>
</reference>
<reference key="2">
    <citation type="journal article" date="2004" name="Nature">
        <title>Genome duplication in the teleost fish Tetraodon nigroviridis reveals the early vertebrate proto-karyotype.</title>
        <authorList>
            <person name="Jaillon O."/>
            <person name="Aury J.-M."/>
            <person name="Brunet F."/>
            <person name="Petit J.-L."/>
            <person name="Stange-Thomann N."/>
            <person name="Mauceli E."/>
            <person name="Bouneau L."/>
            <person name="Fischer C."/>
            <person name="Ozouf-Costaz C."/>
            <person name="Bernot A."/>
            <person name="Nicaud S."/>
            <person name="Jaffe D."/>
            <person name="Fisher S."/>
            <person name="Lutfalla G."/>
            <person name="Dossat C."/>
            <person name="Segurens B."/>
            <person name="Dasilva C."/>
            <person name="Salanoubat M."/>
            <person name="Levy M."/>
            <person name="Boudet N."/>
            <person name="Castellano S."/>
            <person name="Anthouard V."/>
            <person name="Jubin C."/>
            <person name="Castelli V."/>
            <person name="Katinka M."/>
            <person name="Vacherie B."/>
            <person name="Biemont C."/>
            <person name="Skalli Z."/>
            <person name="Cattolico L."/>
            <person name="Poulain J."/>
            <person name="De Berardinis V."/>
            <person name="Cruaud C."/>
            <person name="Duprat S."/>
            <person name="Brottier P."/>
            <person name="Coutanceau J.-P."/>
            <person name="Gouzy J."/>
            <person name="Parra G."/>
            <person name="Lardier G."/>
            <person name="Chapple C."/>
            <person name="McKernan K.J."/>
            <person name="McEwan P."/>
            <person name="Bosak S."/>
            <person name="Kellis M."/>
            <person name="Volff J.-N."/>
            <person name="Guigo R."/>
            <person name="Zody M.C."/>
            <person name="Mesirov J."/>
            <person name="Lindblad-Toh K."/>
            <person name="Birren B."/>
            <person name="Nusbaum C."/>
            <person name="Kahn D."/>
            <person name="Robinson-Rechavi M."/>
            <person name="Laudet V."/>
            <person name="Schachter V."/>
            <person name="Quetier F."/>
            <person name="Saurin W."/>
            <person name="Scarpelli C."/>
            <person name="Wincker P."/>
            <person name="Lander E.S."/>
            <person name="Weissenbach J."/>
            <person name="Roest Crollius H."/>
        </authorList>
    </citation>
    <scope>NUCLEOTIDE SEQUENCE [LARGE SCALE GENOMIC DNA]</scope>
</reference>
<organism>
    <name type="scientific">Tetraodon nigroviridis</name>
    <name type="common">Spotted green pufferfish</name>
    <name type="synonym">Chelonodon nigroviridis</name>
    <dbReference type="NCBI Taxonomy" id="99883"/>
    <lineage>
        <taxon>Eukaryota</taxon>
        <taxon>Metazoa</taxon>
        <taxon>Chordata</taxon>
        <taxon>Craniata</taxon>
        <taxon>Vertebrata</taxon>
        <taxon>Euteleostomi</taxon>
        <taxon>Actinopterygii</taxon>
        <taxon>Neopterygii</taxon>
        <taxon>Teleostei</taxon>
        <taxon>Neoteleostei</taxon>
        <taxon>Acanthomorphata</taxon>
        <taxon>Eupercaria</taxon>
        <taxon>Tetraodontiformes</taxon>
        <taxon>Tetradontoidea</taxon>
        <taxon>Tetraodontidae</taxon>
        <taxon>Tetraodon</taxon>
    </lineage>
</organism>
<dbReference type="EMBL" id="AJ293018">
    <property type="protein sequence ID" value="CAC04526.1"/>
    <property type="molecule type" value="Genomic_DNA"/>
</dbReference>
<dbReference type="EMBL" id="CAAE01015033">
    <property type="protein sequence ID" value="CAG11315.1"/>
    <property type="status" value="ALT_SEQ"/>
    <property type="molecule type" value="Genomic_DNA"/>
</dbReference>
<dbReference type="SMR" id="Q9DGG4"/>
<dbReference type="FunCoup" id="Q9DGG4">
    <property type="interactions" value="210"/>
</dbReference>
<dbReference type="STRING" id="99883.ENSTNIP00000021070"/>
<dbReference type="GlyCosmos" id="Q9DGG4">
    <property type="glycosylation" value="3 sites, No reported glycans"/>
</dbReference>
<dbReference type="Ensembl" id="ENSTNIT00000021303.1">
    <property type="protein sequence ID" value="ENSTNIP00000021070.1"/>
    <property type="gene ID" value="ENSTNIG00000017909.1"/>
</dbReference>
<dbReference type="KEGG" id="tng:GSTEN00033246G001"/>
<dbReference type="GeneTree" id="ENSGT01030000234549"/>
<dbReference type="HOGENOM" id="CLU_009579_3_0_1"/>
<dbReference type="InParanoid" id="Q9DGG4"/>
<dbReference type="OMA" id="EFGPLFM"/>
<dbReference type="OrthoDB" id="5962323at2759"/>
<dbReference type="TreeFam" id="TF324998"/>
<dbReference type="Proteomes" id="UP000007303">
    <property type="component" value="Unassembled WGS sequence"/>
</dbReference>
<dbReference type="GO" id="GO:0016020">
    <property type="term" value="C:membrane"/>
    <property type="evidence" value="ECO:0000250"/>
    <property type="project" value="UniProtKB"/>
</dbReference>
<dbReference type="GO" id="GO:0097381">
    <property type="term" value="C:photoreceptor disc membrane"/>
    <property type="evidence" value="ECO:0000250"/>
    <property type="project" value="UniProtKB"/>
</dbReference>
<dbReference type="GO" id="GO:0005886">
    <property type="term" value="C:plasma membrane"/>
    <property type="evidence" value="ECO:0000250"/>
    <property type="project" value="UniProtKB"/>
</dbReference>
<dbReference type="GO" id="GO:0005502">
    <property type="term" value="F:11-cis retinal binding"/>
    <property type="evidence" value="ECO:0000250"/>
    <property type="project" value="UniProtKB"/>
</dbReference>
<dbReference type="GO" id="GO:0008020">
    <property type="term" value="F:G protein-coupled photoreceptor activity"/>
    <property type="evidence" value="ECO:0000250"/>
    <property type="project" value="UniProtKB"/>
</dbReference>
<dbReference type="GO" id="GO:0016038">
    <property type="term" value="P:absorption of visible light"/>
    <property type="evidence" value="ECO:0000250"/>
    <property type="project" value="UniProtKB"/>
</dbReference>
<dbReference type="GO" id="GO:0016056">
    <property type="term" value="P:G protein-coupled opsin signaling pathway"/>
    <property type="evidence" value="ECO:0000250"/>
    <property type="project" value="UniProtKB"/>
</dbReference>
<dbReference type="GO" id="GO:0007601">
    <property type="term" value="P:visual perception"/>
    <property type="evidence" value="ECO:0007669"/>
    <property type="project" value="UniProtKB-KW"/>
</dbReference>
<dbReference type="CDD" id="cd15080">
    <property type="entry name" value="7tmA_MWS_opsin"/>
    <property type="match status" value="1"/>
</dbReference>
<dbReference type="FunFam" id="1.20.1070.10:FF:000018">
    <property type="entry name" value="Rhodopsin"/>
    <property type="match status" value="1"/>
</dbReference>
<dbReference type="Gene3D" id="1.20.1070.10">
    <property type="entry name" value="Rhodopsin 7-helix transmembrane proteins"/>
    <property type="match status" value="1"/>
</dbReference>
<dbReference type="InterPro" id="IPR050125">
    <property type="entry name" value="GPCR_opsins"/>
</dbReference>
<dbReference type="InterPro" id="IPR000276">
    <property type="entry name" value="GPCR_Rhodpsn"/>
</dbReference>
<dbReference type="InterPro" id="IPR017452">
    <property type="entry name" value="GPCR_Rhodpsn_7TM"/>
</dbReference>
<dbReference type="InterPro" id="IPR001760">
    <property type="entry name" value="Opsin"/>
</dbReference>
<dbReference type="InterPro" id="IPR027430">
    <property type="entry name" value="Retinal_BS"/>
</dbReference>
<dbReference type="InterPro" id="IPR000732">
    <property type="entry name" value="Rhodopsin"/>
</dbReference>
<dbReference type="InterPro" id="IPR019477">
    <property type="entry name" value="Rhodopsin_N"/>
</dbReference>
<dbReference type="PANTHER" id="PTHR24240">
    <property type="entry name" value="OPSIN"/>
    <property type="match status" value="1"/>
</dbReference>
<dbReference type="Pfam" id="PF00001">
    <property type="entry name" value="7tm_1"/>
    <property type="match status" value="1"/>
</dbReference>
<dbReference type="Pfam" id="PF10413">
    <property type="entry name" value="Rhodopsin_N"/>
    <property type="match status" value="1"/>
</dbReference>
<dbReference type="PRINTS" id="PR00237">
    <property type="entry name" value="GPCRRHODOPSN"/>
</dbReference>
<dbReference type="PRINTS" id="PR00238">
    <property type="entry name" value="OPSIN"/>
</dbReference>
<dbReference type="PRINTS" id="PR00579">
    <property type="entry name" value="RHODOPSIN"/>
</dbReference>
<dbReference type="SUPFAM" id="SSF81321">
    <property type="entry name" value="Family A G protein-coupled receptor-like"/>
    <property type="match status" value="1"/>
</dbReference>
<dbReference type="PROSITE" id="PS00237">
    <property type="entry name" value="G_PROTEIN_RECEP_F1_1"/>
    <property type="match status" value="1"/>
</dbReference>
<dbReference type="PROSITE" id="PS50262">
    <property type="entry name" value="G_PROTEIN_RECEP_F1_2"/>
    <property type="match status" value="1"/>
</dbReference>
<dbReference type="PROSITE" id="PS00238">
    <property type="entry name" value="OPSIN"/>
    <property type="match status" value="1"/>
</dbReference>
<sequence length="353" mass="39538">MNGTEGPFFYVPMLNTTGIVRSPYDYPQYYLVNPAAYAALGAYMFLLILLGFPINFLTLYVTIEHKKLRTPLNYILLNLAVANLFMVFGGFTTTMYTSMHGYFVLGRLGCNLEGFFATLGGEIGLWSLVVLAIERWMVVCKPISNFRFGENHAIMGLAFTWIMACACAVPPLVGWSRYIPEGMQCSCGVDYYTRAEGFNNESFVVYMFICHFLIPMAVVFFCYGRLLCAVKEAAAAQQESETTQRAEREVTRMVVIMVVAFLICWLPYAGVAWWIFTHQGSEFGPVFMTIPAFFAKSSSIYNPLIYICMNKQFRHCMITTLCCGKNPFEEEEGASTTSKTEASSVSSSSVSPA</sequence>
<name>OPSD_TETNG</name>
<feature type="chain" id="PRO_0000197724" description="Rhodopsin">
    <location>
        <begin position="1"/>
        <end position="353"/>
    </location>
</feature>
<feature type="topological domain" description="Extracellular" evidence="8">
    <location>
        <begin position="1"/>
        <end position="36"/>
    </location>
</feature>
<feature type="transmembrane region" description="Helical; Name=1" evidence="1">
    <location>
        <begin position="37"/>
        <end position="61"/>
    </location>
</feature>
<feature type="topological domain" description="Cytoplasmic" evidence="8">
    <location>
        <begin position="62"/>
        <end position="73"/>
    </location>
</feature>
<feature type="transmembrane region" description="Helical; Name=2" evidence="1">
    <location>
        <begin position="74"/>
        <end position="96"/>
    </location>
</feature>
<feature type="topological domain" description="Extracellular" evidence="8">
    <location>
        <begin position="97"/>
        <end position="110"/>
    </location>
</feature>
<feature type="transmembrane region" description="Helical; Name=3" evidence="1">
    <location>
        <begin position="111"/>
        <end position="133"/>
    </location>
</feature>
<feature type="topological domain" description="Cytoplasmic" evidence="8">
    <location>
        <begin position="134"/>
        <end position="152"/>
    </location>
</feature>
<feature type="transmembrane region" description="Helical; Name=4" evidence="1">
    <location>
        <begin position="153"/>
        <end position="173"/>
    </location>
</feature>
<feature type="topological domain" description="Extracellular" evidence="8">
    <location>
        <begin position="174"/>
        <end position="202"/>
    </location>
</feature>
<feature type="transmembrane region" description="Helical; Name=5" evidence="1">
    <location>
        <begin position="203"/>
        <end position="224"/>
    </location>
</feature>
<feature type="topological domain" description="Cytoplasmic" evidence="8">
    <location>
        <begin position="225"/>
        <end position="252"/>
    </location>
</feature>
<feature type="transmembrane region" description="Helical; Name=6" evidence="1">
    <location>
        <begin position="253"/>
        <end position="274"/>
    </location>
</feature>
<feature type="topological domain" description="Extracellular" evidence="8">
    <location>
        <begin position="275"/>
        <end position="286"/>
    </location>
</feature>
<feature type="transmembrane region" description="Helical; Name=7" evidence="1">
    <location>
        <begin position="287"/>
        <end position="308"/>
    </location>
</feature>
<feature type="topological domain" description="Cytoplasmic" evidence="8">
    <location>
        <begin position="309"/>
        <end position="353"/>
    </location>
</feature>
<feature type="region of interest" description="Disordered" evidence="7">
    <location>
        <begin position="330"/>
        <end position="353"/>
    </location>
</feature>
<feature type="short sequence motif" description="'Ionic lock' involved in activated form stabilization" evidence="1">
    <location>
        <begin position="134"/>
        <end position="136"/>
    </location>
</feature>
<feature type="compositionally biased region" description="Low complexity" evidence="7">
    <location>
        <begin position="334"/>
        <end position="353"/>
    </location>
</feature>
<feature type="site" description="Plays an important role in the conformation switch to the active conformation" evidence="1">
    <location>
        <position position="113"/>
    </location>
</feature>
<feature type="modified residue" description="N6-(retinylidene)lysine" evidence="1">
    <location>
        <position position="296"/>
    </location>
</feature>
<feature type="lipid moiety-binding region" description="S-palmitoyl cysteine" evidence="1">
    <location>
        <position position="322"/>
    </location>
</feature>
<feature type="lipid moiety-binding region" description="S-palmitoyl cysteine" evidence="1">
    <location>
        <position position="323"/>
    </location>
</feature>
<feature type="glycosylation site" description="N-linked (GlcNAc...) asparagine" evidence="5">
    <location>
        <position position="2"/>
    </location>
</feature>
<feature type="glycosylation site" description="N-linked (GlcNAc...) asparagine" evidence="5">
    <location>
        <position position="15"/>
    </location>
</feature>
<feature type="glycosylation site" description="N-linked (GlcNAc...) asparagine" evidence="5">
    <location>
        <position position="200"/>
    </location>
</feature>
<feature type="disulfide bond" evidence="6">
    <location>
        <begin position="110"/>
        <end position="187"/>
    </location>
</feature>
<gene>
    <name type="primary">rho</name>
    <name type="synonym">rhod</name>
    <name type="ORF">GSTENG00033246001</name>
</gene>